<keyword id="KW-0963">Cytoplasm</keyword>
<keyword id="KW-0342">GTP-binding</keyword>
<keyword id="KW-0378">Hydrolase</keyword>
<keyword id="KW-0460">Magnesium</keyword>
<keyword id="KW-0479">Metal-binding</keyword>
<keyword id="KW-0547">Nucleotide-binding</keyword>
<keyword id="KW-1185">Reference proteome</keyword>
<accession>B8IEL9</accession>
<protein>
    <recommendedName>
        <fullName evidence="1">GTPase Obg</fullName>
        <ecNumber evidence="1">3.6.5.-</ecNumber>
    </recommendedName>
    <alternativeName>
        <fullName evidence="1">GTP-binding protein Obg</fullName>
    </alternativeName>
</protein>
<name>OBG_METNO</name>
<sequence length="342" mass="36347">MKFLDEAKVYIRSGDGGAGCVSFRREKFIEFGGPDGGDGGRGGDVWAECVEGLNTLIDYRYQQHFKAKKGEHGSGRNRAGAKGADVVLKVPAGTEILAEDRETQIADLTQVGQRVLLARGGNGGFGNAYFTTSTNRAPRHANPGQEGREHWLWLRLKLIADAGLVGLPNAGKSTFLATVTAAKPKIADYPFTTLHPGLGVVRVDAREFVLADIPGLIEGAHEGVGLGDRFLAHVERCRVLLHLVDGTSEDAGAAYQLVRTELDAYGHGLAEKPEIVALSKADILDPETLAAQVARLEEAAGRPPLVLSAATRQGVPEALRALMAAMDAASAEEAKPAEAWQP</sequence>
<reference key="1">
    <citation type="submission" date="2009-01" db="EMBL/GenBank/DDBJ databases">
        <title>Complete sequence of chromosome of Methylobacterium nodulans ORS 2060.</title>
        <authorList>
            <consortium name="US DOE Joint Genome Institute"/>
            <person name="Lucas S."/>
            <person name="Copeland A."/>
            <person name="Lapidus A."/>
            <person name="Glavina del Rio T."/>
            <person name="Dalin E."/>
            <person name="Tice H."/>
            <person name="Bruce D."/>
            <person name="Goodwin L."/>
            <person name="Pitluck S."/>
            <person name="Sims D."/>
            <person name="Brettin T."/>
            <person name="Detter J.C."/>
            <person name="Han C."/>
            <person name="Larimer F."/>
            <person name="Land M."/>
            <person name="Hauser L."/>
            <person name="Kyrpides N."/>
            <person name="Ivanova N."/>
            <person name="Marx C.J."/>
            <person name="Richardson P."/>
        </authorList>
    </citation>
    <scope>NUCLEOTIDE SEQUENCE [LARGE SCALE GENOMIC DNA]</scope>
    <source>
        <strain>LMG 21967 / CNCM I-2342 / ORS 2060</strain>
    </source>
</reference>
<comment type="function">
    <text evidence="1">An essential GTPase which binds GTP, GDP and possibly (p)ppGpp with moderate affinity, with high nucleotide exchange rates and a fairly low GTP hydrolysis rate. Plays a role in control of the cell cycle, stress response, ribosome biogenesis and in those bacteria that undergo differentiation, in morphogenesis control.</text>
</comment>
<comment type="cofactor">
    <cofactor evidence="1">
        <name>Mg(2+)</name>
        <dbReference type="ChEBI" id="CHEBI:18420"/>
    </cofactor>
</comment>
<comment type="subunit">
    <text evidence="1">Monomer.</text>
</comment>
<comment type="subcellular location">
    <subcellularLocation>
        <location evidence="1">Cytoplasm</location>
    </subcellularLocation>
</comment>
<comment type="similarity">
    <text evidence="1">Belongs to the TRAFAC class OBG-HflX-like GTPase superfamily. OBG GTPase family.</text>
</comment>
<dbReference type="EC" id="3.6.5.-" evidence="1"/>
<dbReference type="EMBL" id="CP001349">
    <property type="protein sequence ID" value="ACL59591.1"/>
    <property type="molecule type" value="Genomic_DNA"/>
</dbReference>
<dbReference type="RefSeq" id="WP_015931225.1">
    <property type="nucleotide sequence ID" value="NC_011894.1"/>
</dbReference>
<dbReference type="SMR" id="B8IEL9"/>
<dbReference type="STRING" id="460265.Mnod_4726"/>
<dbReference type="KEGG" id="mno:Mnod_4726"/>
<dbReference type="eggNOG" id="COG0536">
    <property type="taxonomic scope" value="Bacteria"/>
</dbReference>
<dbReference type="HOGENOM" id="CLU_011747_2_0_5"/>
<dbReference type="OrthoDB" id="9807318at2"/>
<dbReference type="Proteomes" id="UP000008207">
    <property type="component" value="Chromosome"/>
</dbReference>
<dbReference type="GO" id="GO:0005737">
    <property type="term" value="C:cytoplasm"/>
    <property type="evidence" value="ECO:0007669"/>
    <property type="project" value="UniProtKB-SubCell"/>
</dbReference>
<dbReference type="GO" id="GO:0005525">
    <property type="term" value="F:GTP binding"/>
    <property type="evidence" value="ECO:0007669"/>
    <property type="project" value="UniProtKB-UniRule"/>
</dbReference>
<dbReference type="GO" id="GO:0003924">
    <property type="term" value="F:GTPase activity"/>
    <property type="evidence" value="ECO:0007669"/>
    <property type="project" value="UniProtKB-UniRule"/>
</dbReference>
<dbReference type="GO" id="GO:0000287">
    <property type="term" value="F:magnesium ion binding"/>
    <property type="evidence" value="ECO:0007669"/>
    <property type="project" value="InterPro"/>
</dbReference>
<dbReference type="GO" id="GO:0042254">
    <property type="term" value="P:ribosome biogenesis"/>
    <property type="evidence" value="ECO:0007669"/>
    <property type="project" value="UniProtKB-UniRule"/>
</dbReference>
<dbReference type="CDD" id="cd01898">
    <property type="entry name" value="Obg"/>
    <property type="match status" value="1"/>
</dbReference>
<dbReference type="FunFam" id="2.70.210.12:FF:000001">
    <property type="entry name" value="GTPase Obg"/>
    <property type="match status" value="1"/>
</dbReference>
<dbReference type="Gene3D" id="2.70.210.12">
    <property type="entry name" value="GTP1/OBG domain"/>
    <property type="match status" value="1"/>
</dbReference>
<dbReference type="Gene3D" id="3.40.50.300">
    <property type="entry name" value="P-loop containing nucleotide triphosphate hydrolases"/>
    <property type="match status" value="1"/>
</dbReference>
<dbReference type="HAMAP" id="MF_01454">
    <property type="entry name" value="GTPase_Obg"/>
    <property type="match status" value="1"/>
</dbReference>
<dbReference type="InterPro" id="IPR031167">
    <property type="entry name" value="G_OBG"/>
</dbReference>
<dbReference type="InterPro" id="IPR006073">
    <property type="entry name" value="GTP-bd"/>
</dbReference>
<dbReference type="InterPro" id="IPR014100">
    <property type="entry name" value="GTP-bd_Obg/CgtA"/>
</dbReference>
<dbReference type="InterPro" id="IPR006074">
    <property type="entry name" value="GTP1-OBG_CS"/>
</dbReference>
<dbReference type="InterPro" id="IPR006169">
    <property type="entry name" value="GTP1_OBG_dom"/>
</dbReference>
<dbReference type="InterPro" id="IPR036726">
    <property type="entry name" value="GTP1_OBG_dom_sf"/>
</dbReference>
<dbReference type="InterPro" id="IPR045086">
    <property type="entry name" value="OBG_GTPase"/>
</dbReference>
<dbReference type="InterPro" id="IPR027417">
    <property type="entry name" value="P-loop_NTPase"/>
</dbReference>
<dbReference type="NCBIfam" id="TIGR02729">
    <property type="entry name" value="Obg_CgtA"/>
    <property type="match status" value="1"/>
</dbReference>
<dbReference type="NCBIfam" id="NF008955">
    <property type="entry name" value="PRK12297.1"/>
    <property type="match status" value="1"/>
</dbReference>
<dbReference type="NCBIfam" id="NF008956">
    <property type="entry name" value="PRK12299.1"/>
    <property type="match status" value="1"/>
</dbReference>
<dbReference type="PANTHER" id="PTHR11702">
    <property type="entry name" value="DEVELOPMENTALLY REGULATED GTP-BINDING PROTEIN-RELATED"/>
    <property type="match status" value="1"/>
</dbReference>
<dbReference type="PANTHER" id="PTHR11702:SF31">
    <property type="entry name" value="MITOCHONDRIAL RIBOSOME-ASSOCIATED GTPASE 2"/>
    <property type="match status" value="1"/>
</dbReference>
<dbReference type="Pfam" id="PF01018">
    <property type="entry name" value="GTP1_OBG"/>
    <property type="match status" value="1"/>
</dbReference>
<dbReference type="Pfam" id="PF01926">
    <property type="entry name" value="MMR_HSR1"/>
    <property type="match status" value="1"/>
</dbReference>
<dbReference type="PIRSF" id="PIRSF002401">
    <property type="entry name" value="GTP_bd_Obg/CgtA"/>
    <property type="match status" value="1"/>
</dbReference>
<dbReference type="PRINTS" id="PR00326">
    <property type="entry name" value="GTP1OBG"/>
</dbReference>
<dbReference type="SUPFAM" id="SSF82051">
    <property type="entry name" value="Obg GTP-binding protein N-terminal domain"/>
    <property type="match status" value="1"/>
</dbReference>
<dbReference type="SUPFAM" id="SSF52540">
    <property type="entry name" value="P-loop containing nucleoside triphosphate hydrolases"/>
    <property type="match status" value="1"/>
</dbReference>
<dbReference type="PROSITE" id="PS51710">
    <property type="entry name" value="G_OBG"/>
    <property type="match status" value="1"/>
</dbReference>
<dbReference type="PROSITE" id="PS00905">
    <property type="entry name" value="GTP1_OBG"/>
    <property type="match status" value="1"/>
</dbReference>
<dbReference type="PROSITE" id="PS51883">
    <property type="entry name" value="OBG"/>
    <property type="match status" value="1"/>
</dbReference>
<feature type="chain" id="PRO_0000386041" description="GTPase Obg">
    <location>
        <begin position="1"/>
        <end position="342"/>
    </location>
</feature>
<feature type="domain" description="Obg" evidence="2">
    <location>
        <begin position="1"/>
        <end position="159"/>
    </location>
</feature>
<feature type="domain" description="OBG-type G" evidence="1">
    <location>
        <begin position="160"/>
        <end position="327"/>
    </location>
</feature>
<feature type="binding site" evidence="1">
    <location>
        <begin position="166"/>
        <end position="173"/>
    </location>
    <ligand>
        <name>GTP</name>
        <dbReference type="ChEBI" id="CHEBI:37565"/>
    </ligand>
</feature>
<feature type="binding site" evidence="1">
    <location>
        <position position="173"/>
    </location>
    <ligand>
        <name>Mg(2+)</name>
        <dbReference type="ChEBI" id="CHEBI:18420"/>
    </ligand>
</feature>
<feature type="binding site" evidence="1">
    <location>
        <begin position="191"/>
        <end position="195"/>
    </location>
    <ligand>
        <name>GTP</name>
        <dbReference type="ChEBI" id="CHEBI:37565"/>
    </ligand>
</feature>
<feature type="binding site" evidence="1">
    <location>
        <position position="193"/>
    </location>
    <ligand>
        <name>Mg(2+)</name>
        <dbReference type="ChEBI" id="CHEBI:18420"/>
    </ligand>
</feature>
<feature type="binding site" evidence="1">
    <location>
        <begin position="212"/>
        <end position="215"/>
    </location>
    <ligand>
        <name>GTP</name>
        <dbReference type="ChEBI" id="CHEBI:37565"/>
    </ligand>
</feature>
<feature type="binding site" evidence="1">
    <location>
        <begin position="279"/>
        <end position="282"/>
    </location>
    <ligand>
        <name>GTP</name>
        <dbReference type="ChEBI" id="CHEBI:37565"/>
    </ligand>
</feature>
<feature type="binding site" evidence="1">
    <location>
        <begin position="308"/>
        <end position="310"/>
    </location>
    <ligand>
        <name>GTP</name>
        <dbReference type="ChEBI" id="CHEBI:37565"/>
    </ligand>
</feature>
<evidence type="ECO:0000255" key="1">
    <source>
        <dbReference type="HAMAP-Rule" id="MF_01454"/>
    </source>
</evidence>
<evidence type="ECO:0000255" key="2">
    <source>
        <dbReference type="PROSITE-ProRule" id="PRU01231"/>
    </source>
</evidence>
<organism>
    <name type="scientific">Methylobacterium nodulans (strain LMG 21967 / CNCM I-2342 / ORS 2060)</name>
    <dbReference type="NCBI Taxonomy" id="460265"/>
    <lineage>
        <taxon>Bacteria</taxon>
        <taxon>Pseudomonadati</taxon>
        <taxon>Pseudomonadota</taxon>
        <taxon>Alphaproteobacteria</taxon>
        <taxon>Hyphomicrobiales</taxon>
        <taxon>Methylobacteriaceae</taxon>
        <taxon>Methylobacterium</taxon>
    </lineage>
</organism>
<gene>
    <name evidence="1" type="primary">obg</name>
    <name type="ordered locus">Mnod_4726</name>
</gene>
<proteinExistence type="inferred from homology"/>